<name>LEUC_VIBC3</name>
<keyword id="KW-0004">4Fe-4S</keyword>
<keyword id="KW-0028">Amino-acid biosynthesis</keyword>
<keyword id="KW-0100">Branched-chain amino acid biosynthesis</keyword>
<keyword id="KW-0408">Iron</keyword>
<keyword id="KW-0411">Iron-sulfur</keyword>
<keyword id="KW-0432">Leucine biosynthesis</keyword>
<keyword id="KW-0456">Lyase</keyword>
<keyword id="KW-0479">Metal-binding</keyword>
<feature type="chain" id="PRO_1000072949" description="3-isopropylmalate dehydratase large subunit">
    <location>
        <begin position="1"/>
        <end position="467"/>
    </location>
</feature>
<feature type="binding site" evidence="1">
    <location>
        <position position="349"/>
    </location>
    <ligand>
        <name>[4Fe-4S] cluster</name>
        <dbReference type="ChEBI" id="CHEBI:49883"/>
    </ligand>
</feature>
<feature type="binding site" evidence="1">
    <location>
        <position position="409"/>
    </location>
    <ligand>
        <name>[4Fe-4S] cluster</name>
        <dbReference type="ChEBI" id="CHEBI:49883"/>
    </ligand>
</feature>
<feature type="binding site" evidence="1">
    <location>
        <position position="412"/>
    </location>
    <ligand>
        <name>[4Fe-4S] cluster</name>
        <dbReference type="ChEBI" id="CHEBI:49883"/>
    </ligand>
</feature>
<protein>
    <recommendedName>
        <fullName evidence="1">3-isopropylmalate dehydratase large subunit</fullName>
        <ecNumber evidence="1">4.2.1.33</ecNumber>
    </recommendedName>
    <alternativeName>
        <fullName evidence="1">Alpha-IPM isomerase</fullName>
        <shortName evidence="1">IPMI</shortName>
    </alternativeName>
    <alternativeName>
        <fullName evidence="1">Isopropylmalate isomerase</fullName>
    </alternativeName>
</protein>
<gene>
    <name evidence="1" type="primary">leuC</name>
    <name type="ordered locus">VC0395_A2067</name>
    <name type="ordered locus">VC395_2606</name>
</gene>
<dbReference type="EC" id="4.2.1.33" evidence="1"/>
<dbReference type="EMBL" id="CP000627">
    <property type="protein sequence ID" value="ABQ21125.1"/>
    <property type="molecule type" value="Genomic_DNA"/>
</dbReference>
<dbReference type="EMBL" id="CP001235">
    <property type="protein sequence ID" value="ACP10593.1"/>
    <property type="molecule type" value="Genomic_DNA"/>
</dbReference>
<dbReference type="RefSeq" id="WP_000030317.1">
    <property type="nucleotide sequence ID" value="NZ_JAACZH010000010.1"/>
</dbReference>
<dbReference type="SMR" id="A5F5E2"/>
<dbReference type="KEGG" id="vco:VC0395_A2067"/>
<dbReference type="KEGG" id="vcr:VC395_2606"/>
<dbReference type="PATRIC" id="fig|345073.21.peg.2509"/>
<dbReference type="eggNOG" id="COG0065">
    <property type="taxonomic scope" value="Bacteria"/>
</dbReference>
<dbReference type="HOGENOM" id="CLU_006714_3_4_6"/>
<dbReference type="OrthoDB" id="9802769at2"/>
<dbReference type="UniPathway" id="UPA00048">
    <property type="reaction ID" value="UER00071"/>
</dbReference>
<dbReference type="Proteomes" id="UP000000249">
    <property type="component" value="Chromosome 2"/>
</dbReference>
<dbReference type="GO" id="GO:0003861">
    <property type="term" value="F:3-isopropylmalate dehydratase activity"/>
    <property type="evidence" value="ECO:0007669"/>
    <property type="project" value="UniProtKB-UniRule"/>
</dbReference>
<dbReference type="GO" id="GO:0051539">
    <property type="term" value="F:4 iron, 4 sulfur cluster binding"/>
    <property type="evidence" value="ECO:0007669"/>
    <property type="project" value="UniProtKB-KW"/>
</dbReference>
<dbReference type="GO" id="GO:0046872">
    <property type="term" value="F:metal ion binding"/>
    <property type="evidence" value="ECO:0007669"/>
    <property type="project" value="UniProtKB-KW"/>
</dbReference>
<dbReference type="GO" id="GO:0009098">
    <property type="term" value="P:L-leucine biosynthetic process"/>
    <property type="evidence" value="ECO:0007669"/>
    <property type="project" value="UniProtKB-UniRule"/>
</dbReference>
<dbReference type="CDD" id="cd01583">
    <property type="entry name" value="IPMI"/>
    <property type="match status" value="1"/>
</dbReference>
<dbReference type="FunFam" id="3.30.499.10:FF:000006">
    <property type="entry name" value="3-isopropylmalate dehydratase large subunit"/>
    <property type="match status" value="1"/>
</dbReference>
<dbReference type="FunFam" id="3.30.499.10:FF:000007">
    <property type="entry name" value="3-isopropylmalate dehydratase large subunit"/>
    <property type="match status" value="1"/>
</dbReference>
<dbReference type="Gene3D" id="3.30.499.10">
    <property type="entry name" value="Aconitase, domain 3"/>
    <property type="match status" value="2"/>
</dbReference>
<dbReference type="HAMAP" id="MF_01026">
    <property type="entry name" value="LeuC_type1"/>
    <property type="match status" value="1"/>
</dbReference>
<dbReference type="InterPro" id="IPR004430">
    <property type="entry name" value="3-IsopropMal_deHydase_lsu"/>
</dbReference>
<dbReference type="InterPro" id="IPR015931">
    <property type="entry name" value="Acnase/IPM_dHydase_lsu_aba_1/3"/>
</dbReference>
<dbReference type="InterPro" id="IPR001030">
    <property type="entry name" value="Acoase/IPM_deHydtase_lsu_aba"/>
</dbReference>
<dbReference type="InterPro" id="IPR018136">
    <property type="entry name" value="Aconitase_4Fe-4S_BS"/>
</dbReference>
<dbReference type="InterPro" id="IPR036008">
    <property type="entry name" value="Aconitase_4Fe-4S_dom"/>
</dbReference>
<dbReference type="InterPro" id="IPR050067">
    <property type="entry name" value="IPM_dehydratase_rel_enz"/>
</dbReference>
<dbReference type="InterPro" id="IPR033941">
    <property type="entry name" value="IPMI_cat"/>
</dbReference>
<dbReference type="NCBIfam" id="TIGR00170">
    <property type="entry name" value="leuC"/>
    <property type="match status" value="1"/>
</dbReference>
<dbReference type="NCBIfam" id="NF004016">
    <property type="entry name" value="PRK05478.1"/>
    <property type="match status" value="1"/>
</dbReference>
<dbReference type="NCBIfam" id="NF009116">
    <property type="entry name" value="PRK12466.1"/>
    <property type="match status" value="1"/>
</dbReference>
<dbReference type="PANTHER" id="PTHR43822:SF9">
    <property type="entry name" value="3-ISOPROPYLMALATE DEHYDRATASE"/>
    <property type="match status" value="1"/>
</dbReference>
<dbReference type="PANTHER" id="PTHR43822">
    <property type="entry name" value="HOMOACONITASE, MITOCHONDRIAL-RELATED"/>
    <property type="match status" value="1"/>
</dbReference>
<dbReference type="Pfam" id="PF00330">
    <property type="entry name" value="Aconitase"/>
    <property type="match status" value="1"/>
</dbReference>
<dbReference type="PRINTS" id="PR00415">
    <property type="entry name" value="ACONITASE"/>
</dbReference>
<dbReference type="SUPFAM" id="SSF53732">
    <property type="entry name" value="Aconitase iron-sulfur domain"/>
    <property type="match status" value="1"/>
</dbReference>
<dbReference type="PROSITE" id="PS00450">
    <property type="entry name" value="ACONITASE_1"/>
    <property type="match status" value="1"/>
</dbReference>
<dbReference type="PROSITE" id="PS01244">
    <property type="entry name" value="ACONITASE_2"/>
    <property type="match status" value="1"/>
</dbReference>
<comment type="function">
    <text evidence="1">Catalyzes the isomerization between 2-isopropylmalate and 3-isopropylmalate, via the formation of 2-isopropylmaleate.</text>
</comment>
<comment type="catalytic activity">
    <reaction evidence="1">
        <text>(2R,3S)-3-isopropylmalate = (2S)-2-isopropylmalate</text>
        <dbReference type="Rhea" id="RHEA:32287"/>
        <dbReference type="ChEBI" id="CHEBI:1178"/>
        <dbReference type="ChEBI" id="CHEBI:35121"/>
        <dbReference type="EC" id="4.2.1.33"/>
    </reaction>
</comment>
<comment type="cofactor">
    <cofactor evidence="1">
        <name>[4Fe-4S] cluster</name>
        <dbReference type="ChEBI" id="CHEBI:49883"/>
    </cofactor>
    <text evidence="1">Binds 1 [4Fe-4S] cluster per subunit.</text>
</comment>
<comment type="pathway">
    <text evidence="1">Amino-acid biosynthesis; L-leucine biosynthesis; L-leucine from 3-methyl-2-oxobutanoate: step 2/4.</text>
</comment>
<comment type="subunit">
    <text evidence="1">Heterodimer of LeuC and LeuD.</text>
</comment>
<comment type="similarity">
    <text evidence="1">Belongs to the aconitase/IPM isomerase family. LeuC type 1 subfamily.</text>
</comment>
<accession>A5F5E2</accession>
<accession>C3M4Y2</accession>
<sequence>MSKAKTLYEKIYDAHVVVAAPGETPILYIDRHLVHEVTSPQAFDGLREKGRPVRQVSKTFATMDHNVSTTTKDINASGEMARIQMQTLSKNCEEFGVTLYDINHKYQGIVHVMGPELGITLPGMTIVCGDSHTATHGAFGSLAFGIGTSEVEHVLATQTLKQGRAKTMKIEVRGKVAPGITAKDIVLAIIGKTTAAGGTGYVVEFCGEAIRDLSMEGRMTVCNMAIELGAKAGLIAPDATTFNYIKGRKFAPQGSDWDAAVDYWQTLKTDEDAQFDAVVTLEASEIKPQVTWGTNPGQVIAVDEPIPSPSQFADPVERSSAEKALAYMGLEAGKMLSDYKVDKVFVGSCTNSRIEDMRAAAAVAKGKKVASHVQALIVPGSEQVKAQAEAEGLDKIFIEAGFEWRLPGCSMCLAMNNDRLGPGERCASTSNRNFEGRQGRDGRTHLVSPAMAAAAAIAGHFVDIRQF</sequence>
<organism>
    <name type="scientific">Vibrio cholerae serotype O1 (strain ATCC 39541 / Classical Ogawa 395 / O395)</name>
    <dbReference type="NCBI Taxonomy" id="345073"/>
    <lineage>
        <taxon>Bacteria</taxon>
        <taxon>Pseudomonadati</taxon>
        <taxon>Pseudomonadota</taxon>
        <taxon>Gammaproteobacteria</taxon>
        <taxon>Vibrionales</taxon>
        <taxon>Vibrionaceae</taxon>
        <taxon>Vibrio</taxon>
    </lineage>
</organism>
<evidence type="ECO:0000255" key="1">
    <source>
        <dbReference type="HAMAP-Rule" id="MF_01026"/>
    </source>
</evidence>
<reference key="1">
    <citation type="submission" date="2007-03" db="EMBL/GenBank/DDBJ databases">
        <authorList>
            <person name="Heidelberg J."/>
        </authorList>
    </citation>
    <scope>NUCLEOTIDE SEQUENCE [LARGE SCALE GENOMIC DNA]</scope>
    <source>
        <strain>ATCC 39541 / Classical Ogawa 395 / O395</strain>
    </source>
</reference>
<reference key="2">
    <citation type="journal article" date="2008" name="PLoS ONE">
        <title>A recalibrated molecular clock and independent origins for the cholera pandemic clones.</title>
        <authorList>
            <person name="Feng L."/>
            <person name="Reeves P.R."/>
            <person name="Lan R."/>
            <person name="Ren Y."/>
            <person name="Gao C."/>
            <person name="Zhou Z."/>
            <person name="Ren Y."/>
            <person name="Cheng J."/>
            <person name="Wang W."/>
            <person name="Wang J."/>
            <person name="Qian W."/>
            <person name="Li D."/>
            <person name="Wang L."/>
        </authorList>
    </citation>
    <scope>NUCLEOTIDE SEQUENCE [LARGE SCALE GENOMIC DNA]</scope>
    <source>
        <strain>ATCC 39541 / Classical Ogawa 395 / O395</strain>
    </source>
</reference>
<proteinExistence type="inferred from homology"/>